<name>RMUC_RICCN</name>
<comment type="function">
    <text evidence="1">Involved in DNA recombination.</text>
</comment>
<comment type="similarity">
    <text evidence="3">Belongs to the RmuC family.</text>
</comment>
<comment type="sequence caution" evidence="3">
    <conflict type="erroneous initiation">
        <sequence resource="EMBL-CDS" id="AAL03595"/>
    </conflict>
</comment>
<evidence type="ECO:0000250" key="1"/>
<evidence type="ECO:0000255" key="2"/>
<evidence type="ECO:0000305" key="3"/>
<sequence>MSYLLPTIITTLLILLALIIWFYVKTQTLRTQLQFLSEQNLEISNNNQLLNQEQIGYLQKIEQLQCKIEYQAQTIKDSEKIREESFSSAKAALFDLGQDLSKQLIEIHKMENTAARELAEKNIATASGKFNSEFERLITMVGALNKDIEQSKGTVDLIKQSLLSPIGAGLLAEITLENILKSSGLRPNLDFIMQYGLTTLDSGKLRPDALIFLPSGNLMVIDSKASKFLVDKQDNNMSLNKTMNYHLKSLANKEYAANILTNLNKKDQSFNNVMTLMFLPTEQAVEKVIAADPEFLQKAWGCNIFPVGPSGLMNMLSFAKFQITDHRRSENYKVIIEEVRKLLSSIGTMADYSQKIGNNLHNMVTNYDKFAASFNRNFMSRVKNIQKLGIDSGNKAMPATLERYQIVSSKSEIIEVEAENPPQIAEKL</sequence>
<feature type="chain" id="PRO_0000202049" description="DNA recombination protein RmuC homolog">
    <location>
        <begin position="1"/>
        <end position="428"/>
    </location>
</feature>
<feature type="coiled-coil region" evidence="2">
    <location>
        <begin position="25"/>
        <end position="84"/>
    </location>
</feature>
<dbReference type="EMBL" id="AE006914">
    <property type="protein sequence ID" value="AAL03595.1"/>
    <property type="status" value="ALT_INIT"/>
    <property type="molecule type" value="Genomic_DNA"/>
</dbReference>
<dbReference type="PIR" id="A97832">
    <property type="entry name" value="A97832"/>
</dbReference>
<dbReference type="RefSeq" id="WP_016830921.1">
    <property type="nucleotide sequence ID" value="NC_003103.1"/>
</dbReference>
<dbReference type="SMR" id="Q92GR5"/>
<dbReference type="GeneID" id="928207"/>
<dbReference type="KEGG" id="rco:RC1057"/>
<dbReference type="PATRIC" id="fig|272944.4.peg.1210"/>
<dbReference type="HOGENOM" id="CLU_640725_0_0_5"/>
<dbReference type="Proteomes" id="UP000000816">
    <property type="component" value="Chromosome"/>
</dbReference>
<dbReference type="GO" id="GO:0006310">
    <property type="term" value="P:DNA recombination"/>
    <property type="evidence" value="ECO:0007669"/>
    <property type="project" value="UniProtKB-KW"/>
</dbReference>
<dbReference type="InterPro" id="IPR003798">
    <property type="entry name" value="DNA_recombination_RmuC"/>
</dbReference>
<dbReference type="PANTHER" id="PTHR30563">
    <property type="entry name" value="DNA RECOMBINATION PROTEIN RMUC"/>
    <property type="match status" value="1"/>
</dbReference>
<dbReference type="PANTHER" id="PTHR30563:SF0">
    <property type="entry name" value="DNA RECOMBINATION PROTEIN RMUC"/>
    <property type="match status" value="1"/>
</dbReference>
<dbReference type="Pfam" id="PF02646">
    <property type="entry name" value="RmuC"/>
    <property type="match status" value="1"/>
</dbReference>
<keyword id="KW-0175">Coiled coil</keyword>
<keyword id="KW-0233">DNA recombination</keyword>
<protein>
    <recommendedName>
        <fullName>DNA recombination protein RmuC homolog</fullName>
    </recommendedName>
</protein>
<organism>
    <name type="scientific">Rickettsia conorii (strain ATCC VR-613 / Malish 7)</name>
    <dbReference type="NCBI Taxonomy" id="272944"/>
    <lineage>
        <taxon>Bacteria</taxon>
        <taxon>Pseudomonadati</taxon>
        <taxon>Pseudomonadota</taxon>
        <taxon>Alphaproteobacteria</taxon>
        <taxon>Rickettsiales</taxon>
        <taxon>Rickettsiaceae</taxon>
        <taxon>Rickettsieae</taxon>
        <taxon>Rickettsia</taxon>
        <taxon>spotted fever group</taxon>
    </lineage>
</organism>
<gene>
    <name type="primary">rmuC</name>
    <name type="ordered locus">RC1057</name>
</gene>
<reference key="1">
    <citation type="journal article" date="2001" name="Science">
        <title>Mechanisms of evolution in Rickettsia conorii and R. prowazekii.</title>
        <authorList>
            <person name="Ogata H."/>
            <person name="Audic S."/>
            <person name="Renesto-Audiffren P."/>
            <person name="Fournier P.-E."/>
            <person name="Barbe V."/>
            <person name="Samson D."/>
            <person name="Roux V."/>
            <person name="Cossart P."/>
            <person name="Weissenbach J."/>
            <person name="Claverie J.-M."/>
            <person name="Raoult D."/>
        </authorList>
    </citation>
    <scope>NUCLEOTIDE SEQUENCE [LARGE SCALE GENOMIC DNA]</scope>
    <source>
        <strain>ATCC VR-613 / Malish 7</strain>
    </source>
</reference>
<proteinExistence type="inferred from homology"/>
<accession>Q92GR5</accession>